<sequence>MPSIDCKRLQKLAPKSPENQSKCISRLRYMVMLDQVESDEGGNSSTRPYVWAVLLNAPPRNADEYIRYVRQGPSPMAQKIQNDVSRTLVVESQFHSRVSQSSLSRLLNAYVWKRGALYVQGMNVLASPFLYACKSENQAFQFFDRLLQNECPLYVLPNIDGVHRGAKLLDKCLEVLDHRLYTYLLSKGLTAKIYALPSILTLSACTAPLSEALTIWDFLFAYGIHLNILCVIAQMFIFREQLIDHPSPMTLLRTFPPLNAKNIMKITILLISKLPPELYNLLARHAWDSEAGVLIDRLT</sequence>
<organism>
    <name type="scientific">Schizosaccharomyces pombe (strain 972 / ATCC 24843)</name>
    <name type="common">Fission yeast</name>
    <dbReference type="NCBI Taxonomy" id="284812"/>
    <lineage>
        <taxon>Eukaryota</taxon>
        <taxon>Fungi</taxon>
        <taxon>Dikarya</taxon>
        <taxon>Ascomycota</taxon>
        <taxon>Taphrinomycotina</taxon>
        <taxon>Schizosaccharomycetes</taxon>
        <taxon>Schizosaccharomycetales</taxon>
        <taxon>Schizosaccharomycetaceae</taxon>
        <taxon>Schizosaccharomyces</taxon>
    </lineage>
</organism>
<comment type="function">
    <text>Has a dual role in the cell cycle. In mitosis, it is involved in maintenance of cdc2 kinase activity. It is subsequently required for regulation of septum formation. Could be involved in maintenance of cdc2 kinase activity by preventing, directly or indirectly, the degradation of cyclin or the dephosphorylation of 'Thr-167' of cdc2.</text>
</comment>
<comment type="interaction">
    <interactant intactId="EBI-1997321">
        <id>P36618</id>
    </interactant>
    <interactant intactId="EBI-1997311">
        <id>Q10951</id>
        <label>byr4</label>
    </interactant>
    <organismsDiffer>false</organismsDiffer>
    <experiments>6</experiments>
</comment>
<comment type="subcellular location">
    <subcellularLocation>
        <location evidence="2">Cytoplasm</location>
    </subcellularLocation>
    <subcellularLocation>
        <location evidence="2">Cytoplasm</location>
        <location evidence="2">Cytoskeleton</location>
        <location evidence="2">Microtubule organizing center</location>
        <location evidence="2">Spindle pole body</location>
    </subcellularLocation>
</comment>
<comment type="similarity">
    <text evidence="3">Belongs to the BUB2 family.</text>
</comment>
<keyword id="KW-0131">Cell cycle</keyword>
<keyword id="KW-0963">Cytoplasm</keyword>
<keyword id="KW-0206">Cytoskeleton</keyword>
<keyword id="KW-1185">Reference proteome</keyword>
<accession>P36618</accession>
<proteinExistence type="evidence at protein level"/>
<evidence type="ECO:0000255" key="1">
    <source>
        <dbReference type="PROSITE-ProRule" id="PRU00163"/>
    </source>
</evidence>
<evidence type="ECO:0000269" key="2">
    <source>
    </source>
</evidence>
<evidence type="ECO:0000305" key="3"/>
<protein>
    <recommendedName>
        <fullName>Cell division control protein 16</fullName>
    </recommendedName>
</protein>
<feature type="chain" id="PRO_0000208009" description="Cell division control protein 16">
    <location>
        <begin position="1"/>
        <end position="299"/>
    </location>
</feature>
<feature type="domain" description="Rab-GAP TBC" evidence="1">
    <location>
        <begin position="41"/>
        <end position="223"/>
    </location>
</feature>
<gene>
    <name type="primary">cdc16</name>
    <name type="synonym">bub2</name>
    <name type="ORF">SPAC6F6.08c</name>
</gene>
<dbReference type="EMBL" id="X71605">
    <property type="protein sequence ID" value="CAA50606.1"/>
    <property type="molecule type" value="Genomic_DNA"/>
</dbReference>
<dbReference type="EMBL" id="CU329670">
    <property type="protein sequence ID" value="CAB11731.1"/>
    <property type="molecule type" value="Genomic_DNA"/>
</dbReference>
<dbReference type="PIR" id="S35315">
    <property type="entry name" value="S35315"/>
</dbReference>
<dbReference type="RefSeq" id="NP_593901.1">
    <property type="nucleotide sequence ID" value="NM_001019331.2"/>
</dbReference>
<dbReference type="SMR" id="P36618"/>
<dbReference type="BioGRID" id="278638">
    <property type="interactions" value="43"/>
</dbReference>
<dbReference type="FunCoup" id="P36618">
    <property type="interactions" value="95"/>
</dbReference>
<dbReference type="IntAct" id="P36618">
    <property type="interactions" value="2"/>
</dbReference>
<dbReference type="STRING" id="284812.P36618"/>
<dbReference type="iPTMnet" id="P36618"/>
<dbReference type="PaxDb" id="4896-SPAC6F6.08c.1"/>
<dbReference type="EnsemblFungi" id="SPAC6F6.08c.1">
    <property type="protein sequence ID" value="SPAC6F6.08c.1:pep"/>
    <property type="gene ID" value="SPAC6F6.08c"/>
</dbReference>
<dbReference type="GeneID" id="2542162"/>
<dbReference type="KEGG" id="spo:2542162"/>
<dbReference type="PomBase" id="SPAC6F6.08c">
    <property type="gene designation" value="cdc16"/>
</dbReference>
<dbReference type="VEuPathDB" id="FungiDB:SPAC6F6.08c"/>
<dbReference type="eggNOG" id="KOG2058">
    <property type="taxonomic scope" value="Eukaryota"/>
</dbReference>
<dbReference type="HOGENOM" id="CLU_029367_2_0_1"/>
<dbReference type="InParanoid" id="P36618"/>
<dbReference type="OMA" id="NIDGVHR"/>
<dbReference type="PhylomeDB" id="P36618"/>
<dbReference type="CD-CODE" id="576F0A76">
    <property type="entry name" value="Centrosome"/>
</dbReference>
<dbReference type="PRO" id="PR:P36618"/>
<dbReference type="Proteomes" id="UP000002485">
    <property type="component" value="Chromosome I"/>
</dbReference>
<dbReference type="GO" id="GO:1990334">
    <property type="term" value="C:Bfa1-Bub2 complex"/>
    <property type="evidence" value="ECO:0000353"/>
    <property type="project" value="PomBase"/>
</dbReference>
<dbReference type="GO" id="GO:0005829">
    <property type="term" value="C:cytosol"/>
    <property type="evidence" value="ECO:0007005"/>
    <property type="project" value="PomBase"/>
</dbReference>
<dbReference type="GO" id="GO:0044732">
    <property type="term" value="C:mitotic spindle pole body"/>
    <property type="evidence" value="ECO:0000314"/>
    <property type="project" value="PomBase"/>
</dbReference>
<dbReference type="GO" id="GO:0005634">
    <property type="term" value="C:nucleus"/>
    <property type="evidence" value="ECO:0007005"/>
    <property type="project" value="PomBase"/>
</dbReference>
<dbReference type="GO" id="GO:0071957">
    <property type="term" value="C:old mitotic spindle pole body"/>
    <property type="evidence" value="ECO:0000314"/>
    <property type="project" value="PomBase"/>
</dbReference>
<dbReference type="GO" id="GO:0010974">
    <property type="term" value="P:negative regulation of division septum assembly"/>
    <property type="evidence" value="ECO:0000315"/>
    <property type="project" value="PomBase"/>
</dbReference>
<dbReference type="GO" id="GO:1902413">
    <property type="term" value="P:negative regulation of mitotic cytokinesis"/>
    <property type="evidence" value="ECO:0000316"/>
    <property type="project" value="PomBase"/>
</dbReference>
<dbReference type="GO" id="GO:0031030">
    <property type="term" value="P:negative regulation of septation initiation signaling"/>
    <property type="evidence" value="ECO:0000316"/>
    <property type="project" value="PomBase"/>
</dbReference>
<dbReference type="FunFam" id="1.10.8.270:FF:000035">
    <property type="entry name" value="Cell cycle arrest protein BUB2"/>
    <property type="match status" value="1"/>
</dbReference>
<dbReference type="FunFam" id="1.10.472.80:FF:000026">
    <property type="entry name" value="Mitotic check point protein (Bub2)"/>
    <property type="match status" value="1"/>
</dbReference>
<dbReference type="Gene3D" id="1.10.8.270">
    <property type="entry name" value="putative rabgap domain of human tbc1 domain family member 14 like domains"/>
    <property type="match status" value="1"/>
</dbReference>
<dbReference type="Gene3D" id="1.10.472.80">
    <property type="entry name" value="Ypt/Rab-GAP domain of gyp1p, domain 3"/>
    <property type="match status" value="1"/>
</dbReference>
<dbReference type="InterPro" id="IPR000195">
    <property type="entry name" value="Rab-GAP-TBC_dom"/>
</dbReference>
<dbReference type="InterPro" id="IPR035969">
    <property type="entry name" value="Rab-GAP_TBC_sf"/>
</dbReference>
<dbReference type="PANTHER" id="PTHR22957:SF263">
    <property type="entry name" value="MITOTIC CHECK POINT PROTEIN BUB2"/>
    <property type="match status" value="1"/>
</dbReference>
<dbReference type="PANTHER" id="PTHR22957">
    <property type="entry name" value="TBC1 DOMAIN FAMILY MEMBER GTPASE-ACTIVATING PROTEIN"/>
    <property type="match status" value="1"/>
</dbReference>
<dbReference type="Pfam" id="PF00566">
    <property type="entry name" value="RabGAP-TBC"/>
    <property type="match status" value="1"/>
</dbReference>
<dbReference type="SMART" id="SM00164">
    <property type="entry name" value="TBC"/>
    <property type="match status" value="1"/>
</dbReference>
<dbReference type="SUPFAM" id="SSF47923">
    <property type="entry name" value="Ypt/Rab-GAP domain of gyp1p"/>
    <property type="match status" value="2"/>
</dbReference>
<dbReference type="PROSITE" id="PS50086">
    <property type="entry name" value="TBC_RABGAP"/>
    <property type="match status" value="1"/>
</dbReference>
<name>CDC16_SCHPO</name>
<reference key="1">
    <citation type="journal article" date="1993" name="EMBO J.">
        <title>The S. pombe cdc16 gene is required both for maintenance of p34cdc2 kinase activity and regulation of septum formation: a link between mitosis and cytokinesis?</title>
        <authorList>
            <person name="Fankhauser C."/>
            <person name="Marks J."/>
            <person name="Reymond A."/>
            <person name="Simanis V."/>
        </authorList>
    </citation>
    <scope>NUCLEOTIDE SEQUENCE [GENOMIC DNA]</scope>
    <source>
        <strain>972 / ATCC 24843</strain>
    </source>
</reference>
<reference key="2">
    <citation type="journal article" date="2002" name="Nature">
        <title>The genome sequence of Schizosaccharomyces pombe.</title>
        <authorList>
            <person name="Wood V."/>
            <person name="Gwilliam R."/>
            <person name="Rajandream M.A."/>
            <person name="Lyne M.H."/>
            <person name="Lyne R."/>
            <person name="Stewart A."/>
            <person name="Sgouros J.G."/>
            <person name="Peat N."/>
            <person name="Hayles J."/>
            <person name="Baker S.G."/>
            <person name="Basham D."/>
            <person name="Bowman S."/>
            <person name="Brooks K."/>
            <person name="Brown D."/>
            <person name="Brown S."/>
            <person name="Chillingworth T."/>
            <person name="Churcher C.M."/>
            <person name="Collins M."/>
            <person name="Connor R."/>
            <person name="Cronin A."/>
            <person name="Davis P."/>
            <person name="Feltwell T."/>
            <person name="Fraser A."/>
            <person name="Gentles S."/>
            <person name="Goble A."/>
            <person name="Hamlin N."/>
            <person name="Harris D.E."/>
            <person name="Hidalgo J."/>
            <person name="Hodgson G."/>
            <person name="Holroyd S."/>
            <person name="Hornsby T."/>
            <person name="Howarth S."/>
            <person name="Huckle E.J."/>
            <person name="Hunt S."/>
            <person name="Jagels K."/>
            <person name="James K.D."/>
            <person name="Jones L."/>
            <person name="Jones M."/>
            <person name="Leather S."/>
            <person name="McDonald S."/>
            <person name="McLean J."/>
            <person name="Mooney P."/>
            <person name="Moule S."/>
            <person name="Mungall K.L."/>
            <person name="Murphy L.D."/>
            <person name="Niblett D."/>
            <person name="Odell C."/>
            <person name="Oliver K."/>
            <person name="O'Neil S."/>
            <person name="Pearson D."/>
            <person name="Quail M.A."/>
            <person name="Rabbinowitsch E."/>
            <person name="Rutherford K.M."/>
            <person name="Rutter S."/>
            <person name="Saunders D."/>
            <person name="Seeger K."/>
            <person name="Sharp S."/>
            <person name="Skelton J."/>
            <person name="Simmonds M.N."/>
            <person name="Squares R."/>
            <person name="Squares S."/>
            <person name="Stevens K."/>
            <person name="Taylor K."/>
            <person name="Taylor R.G."/>
            <person name="Tivey A."/>
            <person name="Walsh S.V."/>
            <person name="Warren T."/>
            <person name="Whitehead S."/>
            <person name="Woodward J.R."/>
            <person name="Volckaert G."/>
            <person name="Aert R."/>
            <person name="Robben J."/>
            <person name="Grymonprez B."/>
            <person name="Weltjens I."/>
            <person name="Vanstreels E."/>
            <person name="Rieger M."/>
            <person name="Schaefer M."/>
            <person name="Mueller-Auer S."/>
            <person name="Gabel C."/>
            <person name="Fuchs M."/>
            <person name="Duesterhoeft A."/>
            <person name="Fritzc C."/>
            <person name="Holzer E."/>
            <person name="Moestl D."/>
            <person name="Hilbert H."/>
            <person name="Borzym K."/>
            <person name="Langer I."/>
            <person name="Beck A."/>
            <person name="Lehrach H."/>
            <person name="Reinhardt R."/>
            <person name="Pohl T.M."/>
            <person name="Eger P."/>
            <person name="Zimmermann W."/>
            <person name="Wedler H."/>
            <person name="Wambutt R."/>
            <person name="Purnelle B."/>
            <person name="Goffeau A."/>
            <person name="Cadieu E."/>
            <person name="Dreano S."/>
            <person name="Gloux S."/>
            <person name="Lelaure V."/>
            <person name="Mottier S."/>
            <person name="Galibert F."/>
            <person name="Aves S.J."/>
            <person name="Xiang Z."/>
            <person name="Hunt C."/>
            <person name="Moore K."/>
            <person name="Hurst S.M."/>
            <person name="Lucas M."/>
            <person name="Rochet M."/>
            <person name="Gaillardin C."/>
            <person name="Tallada V.A."/>
            <person name="Garzon A."/>
            <person name="Thode G."/>
            <person name="Daga R.R."/>
            <person name="Cruzado L."/>
            <person name="Jimenez J."/>
            <person name="Sanchez M."/>
            <person name="del Rey F."/>
            <person name="Benito J."/>
            <person name="Dominguez A."/>
            <person name="Revuelta J.L."/>
            <person name="Moreno S."/>
            <person name="Armstrong J."/>
            <person name="Forsburg S.L."/>
            <person name="Cerutti L."/>
            <person name="Lowe T."/>
            <person name="McCombie W.R."/>
            <person name="Paulsen I."/>
            <person name="Potashkin J."/>
            <person name="Shpakovski G.V."/>
            <person name="Ussery D."/>
            <person name="Barrell B.G."/>
            <person name="Nurse P."/>
        </authorList>
    </citation>
    <scope>NUCLEOTIDE SEQUENCE [LARGE SCALE GENOMIC DNA]</scope>
    <source>
        <strain>972 / ATCC 24843</strain>
    </source>
</reference>
<reference key="3">
    <citation type="journal article" date="2004" name="Curr. Biol.">
        <title>Sid4p-Cdc11p assembles the septation initiation network and its regulators at the S. pombe SPB.</title>
        <authorList>
            <person name="Morrell J.L."/>
            <person name="Tomlin G.C."/>
            <person name="Rajagopalan S."/>
            <person name="Venkatram S."/>
            <person name="Feoktistova A.S."/>
            <person name="Tasto J.J."/>
            <person name="Mehta S."/>
            <person name="Jennings J.L."/>
            <person name="Link A."/>
            <person name="Balasubramanian M.K."/>
            <person name="Gould K.L."/>
        </authorList>
    </citation>
    <scope>INTERACTION WITH CDC11</scope>
</reference>
<reference key="4">
    <citation type="journal article" date="2006" name="Nat. Biotechnol.">
        <title>ORFeome cloning and global analysis of protein localization in the fission yeast Schizosaccharomyces pombe.</title>
        <authorList>
            <person name="Matsuyama A."/>
            <person name="Arai R."/>
            <person name="Yashiroda Y."/>
            <person name="Shirai A."/>
            <person name="Kamata A."/>
            <person name="Sekido S."/>
            <person name="Kobayashi Y."/>
            <person name="Hashimoto A."/>
            <person name="Hamamoto M."/>
            <person name="Hiraoka Y."/>
            <person name="Horinouchi S."/>
            <person name="Yoshida M."/>
        </authorList>
    </citation>
    <scope>SUBCELLULAR LOCATION [LARGE SCALE ANALYSIS]</scope>
</reference>